<evidence type="ECO:0000255" key="1">
    <source>
        <dbReference type="HAMAP-Rule" id="MF_00394"/>
    </source>
</evidence>
<keyword id="KW-0963">Cytoplasm</keyword>
<keyword id="KW-0444">Lipid biosynthesis</keyword>
<keyword id="KW-0443">Lipid metabolism</keyword>
<keyword id="KW-0520">NAD</keyword>
<keyword id="KW-0521">NADP</keyword>
<keyword id="KW-0547">Nucleotide-binding</keyword>
<keyword id="KW-0560">Oxidoreductase</keyword>
<keyword id="KW-0594">Phospholipid biosynthesis</keyword>
<keyword id="KW-1208">Phospholipid metabolism</keyword>
<keyword id="KW-1185">Reference proteome</keyword>
<gene>
    <name evidence="1" type="primary">gpsA</name>
    <name type="ordered locus">BA_1526</name>
    <name type="ordered locus">GBAA_1526</name>
    <name type="ordered locus">BAS1415</name>
</gene>
<dbReference type="EC" id="1.1.1.94" evidence="1"/>
<dbReference type="EMBL" id="AE016879">
    <property type="protein sequence ID" value="AAP25463.1"/>
    <property type="molecule type" value="Genomic_DNA"/>
</dbReference>
<dbReference type="EMBL" id="AE017334">
    <property type="protein sequence ID" value="AAT30624.1"/>
    <property type="molecule type" value="Genomic_DNA"/>
</dbReference>
<dbReference type="EMBL" id="AE017225">
    <property type="protein sequence ID" value="AAT53735.1"/>
    <property type="molecule type" value="Genomic_DNA"/>
</dbReference>
<dbReference type="RefSeq" id="NP_843977.1">
    <property type="nucleotide sequence ID" value="NC_003997.3"/>
</dbReference>
<dbReference type="RefSeq" id="WP_000161771.1">
    <property type="nucleotide sequence ID" value="NZ_WXXJ01000014.1"/>
</dbReference>
<dbReference type="RefSeq" id="YP_027684.1">
    <property type="nucleotide sequence ID" value="NC_005945.1"/>
</dbReference>
<dbReference type="SMR" id="Q81SW8"/>
<dbReference type="IntAct" id="Q81SW8">
    <property type="interactions" value="1"/>
</dbReference>
<dbReference type="STRING" id="261594.GBAA_1526"/>
<dbReference type="DNASU" id="1086773"/>
<dbReference type="GeneID" id="45021500"/>
<dbReference type="KEGG" id="ban:BA_1526"/>
<dbReference type="KEGG" id="bar:GBAA_1526"/>
<dbReference type="KEGG" id="bat:BAS1415"/>
<dbReference type="PATRIC" id="fig|198094.11.peg.1498"/>
<dbReference type="eggNOG" id="COG0240">
    <property type="taxonomic scope" value="Bacteria"/>
</dbReference>
<dbReference type="HOGENOM" id="CLU_033449_0_2_9"/>
<dbReference type="OMA" id="NRMFGNM"/>
<dbReference type="OrthoDB" id="9812273at2"/>
<dbReference type="UniPathway" id="UPA00940"/>
<dbReference type="Proteomes" id="UP000000427">
    <property type="component" value="Chromosome"/>
</dbReference>
<dbReference type="Proteomes" id="UP000000594">
    <property type="component" value="Chromosome"/>
</dbReference>
<dbReference type="GO" id="GO:0005829">
    <property type="term" value="C:cytosol"/>
    <property type="evidence" value="ECO:0007669"/>
    <property type="project" value="TreeGrafter"/>
</dbReference>
<dbReference type="GO" id="GO:0047952">
    <property type="term" value="F:glycerol-3-phosphate dehydrogenase [NAD(P)+] activity"/>
    <property type="evidence" value="ECO:0007669"/>
    <property type="project" value="UniProtKB-UniRule"/>
</dbReference>
<dbReference type="GO" id="GO:0051287">
    <property type="term" value="F:NAD binding"/>
    <property type="evidence" value="ECO:0007669"/>
    <property type="project" value="InterPro"/>
</dbReference>
<dbReference type="GO" id="GO:0005975">
    <property type="term" value="P:carbohydrate metabolic process"/>
    <property type="evidence" value="ECO:0007669"/>
    <property type="project" value="InterPro"/>
</dbReference>
<dbReference type="GO" id="GO:0046167">
    <property type="term" value="P:glycerol-3-phosphate biosynthetic process"/>
    <property type="evidence" value="ECO:0007669"/>
    <property type="project" value="UniProtKB-UniRule"/>
</dbReference>
<dbReference type="GO" id="GO:0046168">
    <property type="term" value="P:glycerol-3-phosphate catabolic process"/>
    <property type="evidence" value="ECO:0007669"/>
    <property type="project" value="InterPro"/>
</dbReference>
<dbReference type="GO" id="GO:0006650">
    <property type="term" value="P:glycerophospholipid metabolic process"/>
    <property type="evidence" value="ECO:0007669"/>
    <property type="project" value="UniProtKB-UniRule"/>
</dbReference>
<dbReference type="GO" id="GO:0008654">
    <property type="term" value="P:phospholipid biosynthetic process"/>
    <property type="evidence" value="ECO:0007669"/>
    <property type="project" value="UniProtKB-KW"/>
</dbReference>
<dbReference type="FunFam" id="1.10.1040.10:FF:000001">
    <property type="entry name" value="Glycerol-3-phosphate dehydrogenase [NAD(P)+]"/>
    <property type="match status" value="1"/>
</dbReference>
<dbReference type="FunFam" id="3.40.50.720:FF:000019">
    <property type="entry name" value="Glycerol-3-phosphate dehydrogenase [NAD(P)+]"/>
    <property type="match status" value="1"/>
</dbReference>
<dbReference type="Gene3D" id="1.10.1040.10">
    <property type="entry name" value="N-(1-d-carboxylethyl)-l-norvaline Dehydrogenase, domain 2"/>
    <property type="match status" value="1"/>
</dbReference>
<dbReference type="Gene3D" id="3.40.50.720">
    <property type="entry name" value="NAD(P)-binding Rossmann-like Domain"/>
    <property type="match status" value="1"/>
</dbReference>
<dbReference type="HAMAP" id="MF_00394">
    <property type="entry name" value="NAD_Glyc3P_dehydrog"/>
    <property type="match status" value="1"/>
</dbReference>
<dbReference type="InterPro" id="IPR008927">
    <property type="entry name" value="6-PGluconate_DH-like_C_sf"/>
</dbReference>
<dbReference type="InterPro" id="IPR013328">
    <property type="entry name" value="6PGD_dom2"/>
</dbReference>
<dbReference type="InterPro" id="IPR006168">
    <property type="entry name" value="G3P_DH_NAD-dep"/>
</dbReference>
<dbReference type="InterPro" id="IPR006109">
    <property type="entry name" value="G3P_DH_NAD-dep_C"/>
</dbReference>
<dbReference type="InterPro" id="IPR011128">
    <property type="entry name" value="G3P_DH_NAD-dep_N"/>
</dbReference>
<dbReference type="InterPro" id="IPR036291">
    <property type="entry name" value="NAD(P)-bd_dom_sf"/>
</dbReference>
<dbReference type="NCBIfam" id="NF000940">
    <property type="entry name" value="PRK00094.1-2"/>
    <property type="match status" value="1"/>
</dbReference>
<dbReference type="NCBIfam" id="NF000941">
    <property type="entry name" value="PRK00094.1-3"/>
    <property type="match status" value="1"/>
</dbReference>
<dbReference type="NCBIfam" id="NF000942">
    <property type="entry name" value="PRK00094.1-4"/>
    <property type="match status" value="1"/>
</dbReference>
<dbReference type="PANTHER" id="PTHR11728">
    <property type="entry name" value="GLYCEROL-3-PHOSPHATE DEHYDROGENASE"/>
    <property type="match status" value="1"/>
</dbReference>
<dbReference type="PANTHER" id="PTHR11728:SF1">
    <property type="entry name" value="GLYCEROL-3-PHOSPHATE DEHYDROGENASE [NAD(+)] 2, CHLOROPLASTIC"/>
    <property type="match status" value="1"/>
</dbReference>
<dbReference type="Pfam" id="PF07479">
    <property type="entry name" value="NAD_Gly3P_dh_C"/>
    <property type="match status" value="1"/>
</dbReference>
<dbReference type="Pfam" id="PF01210">
    <property type="entry name" value="NAD_Gly3P_dh_N"/>
    <property type="match status" value="1"/>
</dbReference>
<dbReference type="PIRSF" id="PIRSF000114">
    <property type="entry name" value="Glycerol-3-P_dh"/>
    <property type="match status" value="1"/>
</dbReference>
<dbReference type="PRINTS" id="PR00077">
    <property type="entry name" value="GPDHDRGNASE"/>
</dbReference>
<dbReference type="SUPFAM" id="SSF48179">
    <property type="entry name" value="6-phosphogluconate dehydrogenase C-terminal domain-like"/>
    <property type="match status" value="1"/>
</dbReference>
<dbReference type="SUPFAM" id="SSF51735">
    <property type="entry name" value="NAD(P)-binding Rossmann-fold domains"/>
    <property type="match status" value="1"/>
</dbReference>
<dbReference type="PROSITE" id="PS00957">
    <property type="entry name" value="NAD_G3PDH"/>
    <property type="match status" value="1"/>
</dbReference>
<reference key="1">
    <citation type="journal article" date="2003" name="Nature">
        <title>The genome sequence of Bacillus anthracis Ames and comparison to closely related bacteria.</title>
        <authorList>
            <person name="Read T.D."/>
            <person name="Peterson S.N."/>
            <person name="Tourasse N.J."/>
            <person name="Baillie L.W."/>
            <person name="Paulsen I.T."/>
            <person name="Nelson K.E."/>
            <person name="Tettelin H."/>
            <person name="Fouts D.E."/>
            <person name="Eisen J.A."/>
            <person name="Gill S.R."/>
            <person name="Holtzapple E.K."/>
            <person name="Okstad O.A."/>
            <person name="Helgason E."/>
            <person name="Rilstone J."/>
            <person name="Wu M."/>
            <person name="Kolonay J.F."/>
            <person name="Beanan M.J."/>
            <person name="Dodson R.J."/>
            <person name="Brinkac L.M."/>
            <person name="Gwinn M.L."/>
            <person name="DeBoy R.T."/>
            <person name="Madpu R."/>
            <person name="Daugherty S.C."/>
            <person name="Durkin A.S."/>
            <person name="Haft D.H."/>
            <person name="Nelson W.C."/>
            <person name="Peterson J.D."/>
            <person name="Pop M."/>
            <person name="Khouri H.M."/>
            <person name="Radune D."/>
            <person name="Benton J.L."/>
            <person name="Mahamoud Y."/>
            <person name="Jiang L."/>
            <person name="Hance I.R."/>
            <person name="Weidman J.F."/>
            <person name="Berry K.J."/>
            <person name="Plaut R.D."/>
            <person name="Wolf A.M."/>
            <person name="Watkins K.L."/>
            <person name="Nierman W.C."/>
            <person name="Hazen A."/>
            <person name="Cline R.T."/>
            <person name="Redmond C."/>
            <person name="Thwaite J.E."/>
            <person name="White O."/>
            <person name="Salzberg S.L."/>
            <person name="Thomason B."/>
            <person name="Friedlander A.M."/>
            <person name="Koehler T.M."/>
            <person name="Hanna P.C."/>
            <person name="Kolstoe A.-B."/>
            <person name="Fraser C.M."/>
        </authorList>
    </citation>
    <scope>NUCLEOTIDE SEQUENCE [LARGE SCALE GENOMIC DNA]</scope>
    <source>
        <strain>Ames / isolate Porton</strain>
    </source>
</reference>
<reference key="2">
    <citation type="journal article" date="2009" name="J. Bacteriol.">
        <title>The complete genome sequence of Bacillus anthracis Ames 'Ancestor'.</title>
        <authorList>
            <person name="Ravel J."/>
            <person name="Jiang L."/>
            <person name="Stanley S.T."/>
            <person name="Wilson M.R."/>
            <person name="Decker R.S."/>
            <person name="Read T.D."/>
            <person name="Worsham P."/>
            <person name="Keim P.S."/>
            <person name="Salzberg S.L."/>
            <person name="Fraser-Liggett C.M."/>
            <person name="Rasko D.A."/>
        </authorList>
    </citation>
    <scope>NUCLEOTIDE SEQUENCE [LARGE SCALE GENOMIC DNA]</scope>
    <source>
        <strain>Ames ancestor</strain>
    </source>
</reference>
<reference key="3">
    <citation type="submission" date="2004-01" db="EMBL/GenBank/DDBJ databases">
        <title>Complete genome sequence of Bacillus anthracis Sterne.</title>
        <authorList>
            <person name="Brettin T.S."/>
            <person name="Bruce D."/>
            <person name="Challacombe J.F."/>
            <person name="Gilna P."/>
            <person name="Han C."/>
            <person name="Hill K."/>
            <person name="Hitchcock P."/>
            <person name="Jackson P."/>
            <person name="Keim P."/>
            <person name="Longmire J."/>
            <person name="Lucas S."/>
            <person name="Okinaka R."/>
            <person name="Richardson P."/>
            <person name="Rubin E."/>
            <person name="Tice H."/>
        </authorList>
    </citation>
    <scope>NUCLEOTIDE SEQUENCE [LARGE SCALE GENOMIC DNA]</scope>
    <source>
        <strain>Sterne</strain>
    </source>
</reference>
<name>GPDA_BACAN</name>
<protein>
    <recommendedName>
        <fullName evidence="1">Glycerol-3-phosphate dehydrogenase [NAD(P)+]</fullName>
        <ecNumber evidence="1">1.1.1.94</ecNumber>
    </recommendedName>
    <alternativeName>
        <fullName evidence="1">NAD(P)(+)-dependent glycerol-3-phosphate dehydrogenase</fullName>
    </alternativeName>
    <alternativeName>
        <fullName evidence="1">NAD(P)H-dependent dihydroxyacetone-phosphate reductase</fullName>
    </alternativeName>
</protein>
<feature type="chain" id="PRO_0000137919" description="Glycerol-3-phosphate dehydrogenase [NAD(P)+]">
    <location>
        <begin position="1"/>
        <end position="340"/>
    </location>
</feature>
<feature type="active site" description="Proton acceptor" evidence="1">
    <location>
        <position position="192"/>
    </location>
</feature>
<feature type="binding site" evidence="1">
    <location>
        <position position="11"/>
    </location>
    <ligand>
        <name>NADPH</name>
        <dbReference type="ChEBI" id="CHEBI:57783"/>
    </ligand>
</feature>
<feature type="binding site" evidence="1">
    <location>
        <position position="12"/>
    </location>
    <ligand>
        <name>NADPH</name>
        <dbReference type="ChEBI" id="CHEBI:57783"/>
    </ligand>
</feature>
<feature type="binding site" evidence="1">
    <location>
        <position position="33"/>
    </location>
    <ligand>
        <name>NADPH</name>
        <dbReference type="ChEBI" id="CHEBI:57783"/>
    </ligand>
</feature>
<feature type="binding site" evidence="1">
    <location>
        <position position="106"/>
    </location>
    <ligand>
        <name>NADPH</name>
        <dbReference type="ChEBI" id="CHEBI:57783"/>
    </ligand>
</feature>
<feature type="binding site" evidence="1">
    <location>
        <position position="106"/>
    </location>
    <ligand>
        <name>sn-glycerol 3-phosphate</name>
        <dbReference type="ChEBI" id="CHEBI:57597"/>
    </ligand>
</feature>
<feature type="binding site" evidence="1">
    <location>
        <position position="137"/>
    </location>
    <ligand>
        <name>sn-glycerol 3-phosphate</name>
        <dbReference type="ChEBI" id="CHEBI:57597"/>
    </ligand>
</feature>
<feature type="binding site" evidence="1">
    <location>
        <position position="139"/>
    </location>
    <ligand>
        <name>sn-glycerol 3-phosphate</name>
        <dbReference type="ChEBI" id="CHEBI:57597"/>
    </ligand>
</feature>
<feature type="binding site" evidence="1">
    <location>
        <position position="141"/>
    </location>
    <ligand>
        <name>NADPH</name>
        <dbReference type="ChEBI" id="CHEBI:57783"/>
    </ligand>
</feature>
<feature type="binding site" evidence="1">
    <location>
        <position position="192"/>
    </location>
    <ligand>
        <name>sn-glycerol 3-phosphate</name>
        <dbReference type="ChEBI" id="CHEBI:57597"/>
    </ligand>
</feature>
<feature type="binding site" evidence="1">
    <location>
        <position position="245"/>
    </location>
    <ligand>
        <name>sn-glycerol 3-phosphate</name>
        <dbReference type="ChEBI" id="CHEBI:57597"/>
    </ligand>
</feature>
<feature type="binding site" evidence="1">
    <location>
        <position position="255"/>
    </location>
    <ligand>
        <name>sn-glycerol 3-phosphate</name>
        <dbReference type="ChEBI" id="CHEBI:57597"/>
    </ligand>
</feature>
<feature type="binding site" evidence="1">
    <location>
        <position position="256"/>
    </location>
    <ligand>
        <name>NADPH</name>
        <dbReference type="ChEBI" id="CHEBI:57783"/>
    </ligand>
</feature>
<feature type="binding site" evidence="1">
    <location>
        <position position="256"/>
    </location>
    <ligand>
        <name>sn-glycerol 3-phosphate</name>
        <dbReference type="ChEBI" id="CHEBI:57597"/>
    </ligand>
</feature>
<feature type="binding site" evidence="1">
    <location>
        <position position="257"/>
    </location>
    <ligand>
        <name>sn-glycerol 3-phosphate</name>
        <dbReference type="ChEBI" id="CHEBI:57597"/>
    </ligand>
</feature>
<feature type="binding site" evidence="1">
    <location>
        <position position="280"/>
    </location>
    <ligand>
        <name>NADPH</name>
        <dbReference type="ChEBI" id="CHEBI:57783"/>
    </ligand>
</feature>
<feature type="binding site" evidence="1">
    <location>
        <position position="282"/>
    </location>
    <ligand>
        <name>NADPH</name>
        <dbReference type="ChEBI" id="CHEBI:57783"/>
    </ligand>
</feature>
<accession>Q81SW8</accession>
<accession>Q6I147</accession>
<accession>Q6KV01</accession>
<proteinExistence type="inferred from homology"/>
<organism>
    <name type="scientific">Bacillus anthracis</name>
    <dbReference type="NCBI Taxonomy" id="1392"/>
    <lineage>
        <taxon>Bacteria</taxon>
        <taxon>Bacillati</taxon>
        <taxon>Bacillota</taxon>
        <taxon>Bacilli</taxon>
        <taxon>Bacillales</taxon>
        <taxon>Bacillaceae</taxon>
        <taxon>Bacillus</taxon>
        <taxon>Bacillus cereus group</taxon>
    </lineage>
</organism>
<sequence length="340" mass="36593">MTKITVVGAGSWGTALAMVLADNGHDVRIWGNRSELMDEINTKHENSRYLPGITLPSTIVAYSSLEEALVDVNVVLIVVPTKAYREVLQDMKKYVAGPTTWIHASKGIEPGTSKRISEVIEEEIPEDLIKDVVVLSGPSHAEEVGLRQATTVTSAAKRMEAAEEVQDLFMNSYFRVYTNPDIVGVELGGALKNIIALAAGITDGLGLGDNAKAALMTRGLTEIARLGRKMGGNPLTFAGLTGMGDLIVTCTSVHSRNWRAGNMLGKGHSLEEVLESMGMVVEGVRTTKAAHELAEKMEVEMPITAALYDVLFNGNNVKDAVGSLMGRVRKHEVEAIPDLL</sequence>
<comment type="function">
    <text evidence="1">Catalyzes the reduction of the glycolytic intermediate dihydroxyacetone phosphate (DHAP) to sn-glycerol 3-phosphate (G3P), the key precursor for phospholipid synthesis.</text>
</comment>
<comment type="catalytic activity">
    <reaction evidence="1">
        <text>sn-glycerol 3-phosphate + NAD(+) = dihydroxyacetone phosphate + NADH + H(+)</text>
        <dbReference type="Rhea" id="RHEA:11092"/>
        <dbReference type="ChEBI" id="CHEBI:15378"/>
        <dbReference type="ChEBI" id="CHEBI:57540"/>
        <dbReference type="ChEBI" id="CHEBI:57597"/>
        <dbReference type="ChEBI" id="CHEBI:57642"/>
        <dbReference type="ChEBI" id="CHEBI:57945"/>
        <dbReference type="EC" id="1.1.1.94"/>
    </reaction>
    <physiologicalReaction direction="right-to-left" evidence="1">
        <dbReference type="Rhea" id="RHEA:11094"/>
    </physiologicalReaction>
</comment>
<comment type="catalytic activity">
    <reaction evidence="1">
        <text>sn-glycerol 3-phosphate + NADP(+) = dihydroxyacetone phosphate + NADPH + H(+)</text>
        <dbReference type="Rhea" id="RHEA:11096"/>
        <dbReference type="ChEBI" id="CHEBI:15378"/>
        <dbReference type="ChEBI" id="CHEBI:57597"/>
        <dbReference type="ChEBI" id="CHEBI:57642"/>
        <dbReference type="ChEBI" id="CHEBI:57783"/>
        <dbReference type="ChEBI" id="CHEBI:58349"/>
        <dbReference type="EC" id="1.1.1.94"/>
    </reaction>
    <physiologicalReaction direction="right-to-left" evidence="1">
        <dbReference type="Rhea" id="RHEA:11098"/>
    </physiologicalReaction>
</comment>
<comment type="pathway">
    <text evidence="1">Membrane lipid metabolism; glycerophospholipid metabolism.</text>
</comment>
<comment type="subcellular location">
    <subcellularLocation>
        <location evidence="1">Cytoplasm</location>
    </subcellularLocation>
</comment>
<comment type="similarity">
    <text evidence="1">Belongs to the NAD-dependent glycerol-3-phosphate dehydrogenase family.</text>
</comment>